<sequence length="371" mass="43764">MNVKGRVVLSMLLVSTVMVVFWEYINSPEGSLFWIYQSKNPEVGSSAQRGWWFPSWFNNGTHSYHEEEDAIGNEKEQRKEDNRGELPLVDWFNPEKRPEVVTITRWKAPVVWEGTYNRAVLDNYYAKQKITVGLTVFAVGRYIEHYLEEFLISANTYFMVGHKVIFYIMVDDISRMPLIELGPLRSFKVFEIKSEKRWQDISMMRMKTIGEHILAHIQHEVDFLFCMDVDQVFQNNFGVETLGQSVAQLQAWWYKAHPDEFTYERRKESAAYIPFGQGDFYYHAAIFGGTPTQVLNITQECFKGILQDKENDIEAEWHDESHLNKYFLLNKPTKILSPEYCWDYHIGMSVDIRIVKIAWQKKEYNLVRNNI</sequence>
<accession>P50127</accession>
<reference key="1">
    <citation type="journal article" date="1995" name="Immunogenetics">
        <title>cDNA sequence and chromosome localization of pig alpha 1,3 galactosyltransferase.</title>
        <authorList>
            <person name="Strahan K.M."/>
            <person name="Gu F."/>
            <person name="Preece A.F."/>
            <person name="Gustavsson I."/>
            <person name="Andersson L."/>
            <person name="Gustafsson K."/>
        </authorList>
    </citation>
    <scope>NUCLEOTIDE SEQUENCE [MRNA]</scope>
    <source>
        <strain>Yorkshire</strain>
        <tissue>Spleen</tissue>
    </source>
</reference>
<reference key="2">
    <citation type="submission" date="1995-02" db="EMBL/GenBank/DDBJ databases">
        <authorList>
            <person name="Sandrin M.S."/>
            <person name="Dabkowski P.L."/>
            <person name="Henning M.M."/>
            <person name="Mouhtouris E."/>
            <person name="McKenzie I.F.C."/>
        </authorList>
    </citation>
    <scope>NUCLEOTIDE SEQUENCE [MRNA]</scope>
    <source>
        <tissue>Liver</tissue>
        <tissue>Spleen</tissue>
    </source>
</reference>
<dbReference type="EC" id="2.4.1.87" evidence="2"/>
<dbReference type="EMBL" id="L36152">
    <property type="protein sequence ID" value="AAA73558.1"/>
    <property type="molecule type" value="mRNA"/>
</dbReference>
<dbReference type="EMBL" id="L36535">
    <property type="protein sequence ID" value="AAA58775.1"/>
    <property type="molecule type" value="mRNA"/>
</dbReference>
<dbReference type="PIR" id="I46583">
    <property type="entry name" value="I46583"/>
</dbReference>
<dbReference type="RefSeq" id="NP_001309984.1">
    <molecule id="P50127-2"/>
    <property type="nucleotide sequence ID" value="NM_001323055.1"/>
</dbReference>
<dbReference type="RefSeq" id="NP_001309985.1">
    <molecule id="P50127-2"/>
    <property type="nucleotide sequence ID" value="NM_001323056.1"/>
</dbReference>
<dbReference type="RefSeq" id="NP_998975.1">
    <molecule id="P50127-1"/>
    <property type="nucleotide sequence ID" value="NM_213810.3"/>
</dbReference>
<dbReference type="RefSeq" id="XP_005660456.1">
    <molecule id="P50127-1"/>
    <property type="nucleotide sequence ID" value="XM_005660399.2"/>
</dbReference>
<dbReference type="SMR" id="P50127"/>
<dbReference type="FunCoup" id="P50127">
    <property type="interactions" value="59"/>
</dbReference>
<dbReference type="STRING" id="9823.ENSSSCP00000020866"/>
<dbReference type="BindingDB" id="P50127"/>
<dbReference type="ChEMBL" id="CHEMBL2942"/>
<dbReference type="CAZy" id="GT6">
    <property type="family name" value="Glycosyltransferase Family 6"/>
</dbReference>
<dbReference type="GlyCosmos" id="P50127">
    <property type="glycosylation" value="2 sites, No reported glycans"/>
</dbReference>
<dbReference type="GlyGen" id="P50127">
    <property type="glycosylation" value="2 sites"/>
</dbReference>
<dbReference type="PaxDb" id="9823-ENSSSCP00000005915"/>
<dbReference type="PeptideAtlas" id="P50127"/>
<dbReference type="Ensembl" id="ENSSSCT00000029057.2">
    <molecule id="P50127-2"/>
    <property type="protein sequence ID" value="ENSSSCP00000020866.1"/>
    <property type="gene ID" value="ENSSSCG00000005518.5"/>
</dbReference>
<dbReference type="Ensembl" id="ENSSSCT00015052457.1">
    <molecule id="P50127-2"/>
    <property type="protein sequence ID" value="ENSSSCP00015020996.1"/>
    <property type="gene ID" value="ENSSSCG00015038751.1"/>
</dbReference>
<dbReference type="Ensembl" id="ENSSSCT00025019506.1">
    <molecule id="P50127-2"/>
    <property type="protein sequence ID" value="ENSSSCP00025007906.1"/>
    <property type="gene ID" value="ENSSSCG00025014580.1"/>
</dbReference>
<dbReference type="Ensembl" id="ENSSSCT00030036905.1">
    <molecule id="P50127-2"/>
    <property type="protein sequence ID" value="ENSSSCP00030016893.1"/>
    <property type="gene ID" value="ENSSSCG00030026383.1"/>
</dbReference>
<dbReference type="Ensembl" id="ENSSSCT00035107250.1">
    <molecule id="P50127-1"/>
    <property type="protein sequence ID" value="ENSSSCP00035046293.1"/>
    <property type="gene ID" value="ENSSSCG00035077948.1"/>
</dbReference>
<dbReference type="Ensembl" id="ENSSSCT00035107277.1">
    <molecule id="P50127-2"/>
    <property type="protein sequence ID" value="ENSSSCP00035046308.1"/>
    <property type="gene ID" value="ENSSSCG00035077948.1"/>
</dbReference>
<dbReference type="Ensembl" id="ENSSSCT00035107350.1">
    <molecule id="P50127-1"/>
    <property type="protein sequence ID" value="ENSSSCP00035046347.1"/>
    <property type="gene ID" value="ENSSSCG00035077948.1"/>
</dbReference>
<dbReference type="Ensembl" id="ENSSSCT00035107436.1">
    <molecule id="P50127-1"/>
    <property type="protein sequence ID" value="ENSSSCP00035046397.1"/>
    <property type="gene ID" value="ENSSSCG00035077948.1"/>
</dbReference>
<dbReference type="Ensembl" id="ENSSSCT00035107503.1">
    <molecule id="P50127-1"/>
    <property type="protein sequence ID" value="ENSSSCP00035046449.1"/>
    <property type="gene ID" value="ENSSSCG00035077948.1"/>
</dbReference>
<dbReference type="Ensembl" id="ENSSSCT00040073279.1">
    <molecule id="P50127-2"/>
    <property type="protein sequence ID" value="ENSSSCP00040031357.1"/>
    <property type="gene ID" value="ENSSSCG00040054081.1"/>
</dbReference>
<dbReference type="Ensembl" id="ENSSSCT00045065961.1">
    <molecule id="P50127-2"/>
    <property type="protein sequence ID" value="ENSSSCP00045046725.1"/>
    <property type="gene ID" value="ENSSSCG00045038110.1"/>
</dbReference>
<dbReference type="Ensembl" id="ENSSSCT00050062623.1">
    <molecule id="P50127-2"/>
    <property type="protein sequence ID" value="ENSSSCP00050026879.1"/>
    <property type="gene ID" value="ENSSSCG00050046023.1"/>
</dbReference>
<dbReference type="Ensembl" id="ENSSSCT00055031386.1">
    <molecule id="P50127-2"/>
    <property type="protein sequence ID" value="ENSSSCP00055024988.1"/>
    <property type="gene ID" value="ENSSSCG00055015900.1"/>
</dbReference>
<dbReference type="Ensembl" id="ENSSSCT00060011249.1">
    <molecule id="P50127-2"/>
    <property type="protein sequence ID" value="ENSSSCP00060004174.1"/>
    <property type="gene ID" value="ENSSSCG00060008737.1"/>
</dbReference>
<dbReference type="Ensembl" id="ENSSSCT00065003518.1">
    <molecule id="P50127-1"/>
    <property type="protein sequence ID" value="ENSSSCP00065001292.1"/>
    <property type="gene ID" value="ENSSSCG00065002556.1"/>
</dbReference>
<dbReference type="Ensembl" id="ENSSSCT00065003524.1">
    <molecule id="P50127-2"/>
    <property type="protein sequence ID" value="ENSSSCP00065001295.1"/>
    <property type="gene ID" value="ENSSSCG00065002556.1"/>
</dbReference>
<dbReference type="Ensembl" id="ENSSSCT00065003527.1">
    <molecule id="P50127-2"/>
    <property type="protein sequence ID" value="ENSSSCP00065001297.1"/>
    <property type="gene ID" value="ENSSSCG00065002556.1"/>
</dbReference>
<dbReference type="Ensembl" id="ENSSSCT00065003559.1">
    <molecule id="P50127-1"/>
    <property type="protein sequence ID" value="ENSSSCP00065001318.1"/>
    <property type="gene ID" value="ENSSSCG00065002556.1"/>
</dbReference>
<dbReference type="Ensembl" id="ENSSSCT00065003564.1">
    <molecule id="P50127-1"/>
    <property type="protein sequence ID" value="ENSSSCP00065001321.1"/>
    <property type="gene ID" value="ENSSSCG00065002556.1"/>
</dbReference>
<dbReference type="Ensembl" id="ENSSSCT00065003571.1">
    <molecule id="P50127-1"/>
    <property type="protein sequence ID" value="ENSSSCP00065001326.1"/>
    <property type="gene ID" value="ENSSSCG00065002556.1"/>
</dbReference>
<dbReference type="Ensembl" id="ENSSSCT00070036262.1">
    <molecule id="P50127-1"/>
    <property type="protein sequence ID" value="ENSSSCP00070030316.1"/>
    <property type="gene ID" value="ENSSSCG00070018338.1"/>
</dbReference>
<dbReference type="Ensembl" id="ENSSSCT00070036264.1">
    <molecule id="P50127-2"/>
    <property type="protein sequence ID" value="ENSSSCP00070030318.1"/>
    <property type="gene ID" value="ENSSSCG00070018338.1"/>
</dbReference>
<dbReference type="Ensembl" id="ENSSSCT00070036268.1">
    <molecule id="P50127-2"/>
    <property type="protein sequence ID" value="ENSSSCP00070030321.1"/>
    <property type="gene ID" value="ENSSSCG00070018338.1"/>
</dbReference>
<dbReference type="Ensembl" id="ENSSSCT00090049887">
    <molecule id="P50127-1"/>
    <property type="protein sequence ID" value="ENSSSCP00090031025"/>
    <property type="gene ID" value="ENSSSCG00090028104"/>
</dbReference>
<dbReference type="Ensembl" id="ENSSSCT00105041966">
    <molecule id="P50127-1"/>
    <property type="protein sequence ID" value="ENSSSCP00105029256"/>
    <property type="gene ID" value="ENSSSCG00105021822"/>
</dbReference>
<dbReference type="Ensembl" id="ENSSSCT00115024560">
    <molecule id="P50127-1"/>
    <property type="protein sequence ID" value="ENSSSCP00115023288"/>
    <property type="gene ID" value="ENSSSCG00115014091"/>
</dbReference>
<dbReference type="Ensembl" id="ENSSSCT00130066280">
    <molecule id="P50127-1"/>
    <property type="protein sequence ID" value="ENSSSCP00130047569"/>
    <property type="gene ID" value="ENSSSCG00130033815"/>
</dbReference>
<dbReference type="GeneID" id="396733"/>
<dbReference type="KEGG" id="ssc:396733"/>
<dbReference type="CTD" id="2681"/>
<dbReference type="eggNOG" id="ENOG502QW2H">
    <property type="taxonomic scope" value="Eukaryota"/>
</dbReference>
<dbReference type="GeneTree" id="ENSGT00950000182858"/>
<dbReference type="HOGENOM" id="CLU_062445_1_0_1"/>
<dbReference type="InParanoid" id="P50127"/>
<dbReference type="OrthoDB" id="10013941at2759"/>
<dbReference type="TreeFam" id="TF330991"/>
<dbReference type="BRENDA" id="2.4.1.87">
    <property type="organism ID" value="6170"/>
</dbReference>
<dbReference type="UniPathway" id="UPA00378"/>
<dbReference type="Proteomes" id="UP000008227">
    <property type="component" value="Chromosome 1"/>
</dbReference>
<dbReference type="Proteomes" id="UP000314985">
    <property type="component" value="Chromosome 1"/>
</dbReference>
<dbReference type="Proteomes" id="UP000694570">
    <property type="component" value="Unplaced"/>
</dbReference>
<dbReference type="Proteomes" id="UP000694571">
    <property type="component" value="Unplaced"/>
</dbReference>
<dbReference type="Proteomes" id="UP000694720">
    <property type="component" value="Unplaced"/>
</dbReference>
<dbReference type="Proteomes" id="UP000694722">
    <property type="component" value="Unplaced"/>
</dbReference>
<dbReference type="Proteomes" id="UP000694723">
    <property type="component" value="Unplaced"/>
</dbReference>
<dbReference type="Proteomes" id="UP000694724">
    <property type="component" value="Unplaced"/>
</dbReference>
<dbReference type="Proteomes" id="UP000694725">
    <property type="component" value="Unplaced"/>
</dbReference>
<dbReference type="Proteomes" id="UP000694726">
    <property type="component" value="Unplaced"/>
</dbReference>
<dbReference type="Proteomes" id="UP000694727">
    <property type="component" value="Unplaced"/>
</dbReference>
<dbReference type="Proteomes" id="UP000694728">
    <property type="component" value="Unplaced"/>
</dbReference>
<dbReference type="Bgee" id="ENSSSCG00000005518">
    <property type="expression patterns" value="Expressed in spleen and 43 other cell types or tissues"/>
</dbReference>
<dbReference type="ExpressionAtlas" id="P50127">
    <property type="expression patterns" value="baseline and differential"/>
</dbReference>
<dbReference type="GO" id="GO:0005794">
    <property type="term" value="C:Golgi apparatus"/>
    <property type="evidence" value="ECO:0000318"/>
    <property type="project" value="GO_Central"/>
</dbReference>
<dbReference type="GO" id="GO:0031985">
    <property type="term" value="C:Golgi cisterna"/>
    <property type="evidence" value="ECO:0000250"/>
    <property type="project" value="UniProtKB"/>
</dbReference>
<dbReference type="GO" id="GO:0032580">
    <property type="term" value="C:Golgi cisterna membrane"/>
    <property type="evidence" value="ECO:0007669"/>
    <property type="project" value="UniProtKB-SubCell"/>
</dbReference>
<dbReference type="GO" id="GO:0031982">
    <property type="term" value="C:vesicle"/>
    <property type="evidence" value="ECO:0000318"/>
    <property type="project" value="GO_Central"/>
</dbReference>
<dbReference type="GO" id="GO:0016757">
    <property type="term" value="F:glycosyltransferase activity"/>
    <property type="evidence" value="ECO:0000318"/>
    <property type="project" value="GO_Central"/>
</dbReference>
<dbReference type="GO" id="GO:0046872">
    <property type="term" value="F:metal ion binding"/>
    <property type="evidence" value="ECO:0007669"/>
    <property type="project" value="UniProtKB-KW"/>
</dbReference>
<dbReference type="GO" id="GO:0047276">
    <property type="term" value="F:N-acetyllactosaminide 3-alpha-galactosyltransferase activity"/>
    <property type="evidence" value="ECO:0007669"/>
    <property type="project" value="UniProtKB-EC"/>
</dbReference>
<dbReference type="GO" id="GO:0005975">
    <property type="term" value="P:carbohydrate metabolic process"/>
    <property type="evidence" value="ECO:0007669"/>
    <property type="project" value="InterPro"/>
</dbReference>
<dbReference type="GO" id="GO:0030259">
    <property type="term" value="P:lipid glycosylation"/>
    <property type="evidence" value="ECO:0000318"/>
    <property type="project" value="GO_Central"/>
</dbReference>
<dbReference type="GO" id="GO:0006486">
    <property type="term" value="P:protein glycosylation"/>
    <property type="evidence" value="ECO:0007669"/>
    <property type="project" value="UniProtKB-UniPathway"/>
</dbReference>
<dbReference type="CDD" id="cd02515">
    <property type="entry name" value="Glyco_transf_6"/>
    <property type="match status" value="1"/>
</dbReference>
<dbReference type="FunFam" id="3.90.550.10:FF:000022">
    <property type="entry name" value="Histo-blood group ABO system transferase"/>
    <property type="match status" value="1"/>
</dbReference>
<dbReference type="Gene3D" id="3.90.550.10">
    <property type="entry name" value="Spore Coat Polysaccharide Biosynthesis Protein SpsA, Chain A"/>
    <property type="match status" value="1"/>
</dbReference>
<dbReference type="InterPro" id="IPR005076">
    <property type="entry name" value="Glyco_trans_6"/>
</dbReference>
<dbReference type="InterPro" id="IPR029044">
    <property type="entry name" value="Nucleotide-diphossugar_trans"/>
</dbReference>
<dbReference type="PANTHER" id="PTHR10462">
    <property type="entry name" value="GLYCOSYLTRANSFERASE-RELATED"/>
    <property type="match status" value="1"/>
</dbReference>
<dbReference type="PANTHER" id="PTHR10462:SF26">
    <property type="entry name" value="N-ACETYLLACTOSAMINIDE ALPHA-1,3-GALACTOSYLTRANSFERASE"/>
    <property type="match status" value="1"/>
</dbReference>
<dbReference type="Pfam" id="PF03414">
    <property type="entry name" value="Glyco_transf_6"/>
    <property type="match status" value="1"/>
</dbReference>
<dbReference type="SUPFAM" id="SSF53448">
    <property type="entry name" value="Nucleotide-diphospho-sugar transferases"/>
    <property type="match status" value="1"/>
</dbReference>
<gene>
    <name type="primary">GGTA1</name>
</gene>
<keyword id="KW-0025">Alternative splicing</keyword>
<keyword id="KW-0325">Glycoprotein</keyword>
<keyword id="KW-0328">Glycosyltransferase</keyword>
<keyword id="KW-0333">Golgi apparatus</keyword>
<keyword id="KW-0464">Manganese</keyword>
<keyword id="KW-0472">Membrane</keyword>
<keyword id="KW-0479">Metal-binding</keyword>
<keyword id="KW-1185">Reference proteome</keyword>
<keyword id="KW-0735">Signal-anchor</keyword>
<keyword id="KW-0808">Transferase</keyword>
<keyword id="KW-0812">Transmembrane</keyword>
<keyword id="KW-1133">Transmembrane helix</keyword>
<comment type="function">
    <text evidence="1">Synthesizes the galactose-alpha(1,3)-galactose group by catalyzing the transfer of a galactose residue, with an alpha-1,3 linkage, on terminal lactosaminide (Gal-beta-1,4-GlcNAc-R) disaccharide borne by a glycoprotein or a glycolipid. Preferentially glycosylates proteins, can synthesize galactose-alpha(1,3)-galactose on glycoproteins but cannot synthesize the glycolipid called isogloboside 3 (iGb3) (By similarity).</text>
</comment>
<comment type="catalytic activity">
    <reaction evidence="2">
        <text>a beta-D-galactosyl-(1-&gt;4)-N-acetyl-beta-D-glucosaminyl derivative + UDP-alpha-D-galactose = an alpha-D-galactosyl-(1-&gt;3)-beta-D-galactosyl-(1-&gt;4)-N-acetyl-beta-D-glucosaminyl derivative + UDP + H(+)</text>
        <dbReference type="Rhea" id="RHEA:13013"/>
        <dbReference type="ChEBI" id="CHEBI:15378"/>
        <dbReference type="ChEBI" id="CHEBI:58223"/>
        <dbReference type="ChEBI" id="CHEBI:66914"/>
        <dbReference type="ChEBI" id="CHEBI:133507"/>
        <dbReference type="ChEBI" id="CHEBI:138024"/>
        <dbReference type="EC" id="2.4.1.87"/>
    </reaction>
</comment>
<comment type="cofactor">
    <cofactor evidence="2">
        <name>Mn(2+)</name>
        <dbReference type="ChEBI" id="CHEBI:29035"/>
    </cofactor>
    <text evidence="2">Binds 1 Mn(2+) ion per subunit.</text>
</comment>
<comment type="pathway">
    <text evidence="2">Protein modification; protein glycosylation.</text>
</comment>
<comment type="subcellular location">
    <subcellularLocation>
        <location>Golgi apparatus</location>
        <location>Golgi stack membrane</location>
        <topology>Single-pass type II membrane protein</topology>
    </subcellularLocation>
    <text>Membrane-bound form in trans cisternae of Golgi.</text>
</comment>
<comment type="alternative products">
    <event type="alternative splicing"/>
    <isoform>
        <id>P50127-1</id>
        <name>Long</name>
        <sequence type="displayed"/>
    </isoform>
    <isoform>
        <id>P50127-2</id>
        <name>Short</name>
        <sequence type="described" ref="VSP_001806"/>
    </isoform>
</comment>
<comment type="domain">
    <text>The conserved DXD motif is involved in cofactor binding. The manganese ion interacts with the beta-phosphate group of UDP and may also have a role in catalysis.</text>
</comment>
<comment type="similarity">
    <text evidence="4">Belongs to the glycosyltransferase 6 family.</text>
</comment>
<protein>
    <recommendedName>
        <fullName>N-acetyllactosaminide alpha-1,3-galactosyltransferase</fullName>
        <ecNumber evidence="2">2.4.1.87</ecNumber>
    </recommendedName>
    <alternativeName>
        <fullName>UDP-galactose:beta-D-galactosyl-1,4-N-acetyl-D-glucosaminide alpha-1,3-galactosyltransferase</fullName>
        <shortName>Galactosyltransferase</shortName>
    </alternativeName>
</protein>
<proteinExistence type="evidence at transcript level"/>
<evidence type="ECO:0000250" key="1"/>
<evidence type="ECO:0000250" key="2">
    <source>
        <dbReference type="UniProtKB" id="P14769"/>
    </source>
</evidence>
<evidence type="ECO:0000255" key="3"/>
<evidence type="ECO:0000305" key="4"/>
<feature type="chain" id="PRO_0000157300" description="N-acetyllactosaminide alpha-1,3-galactosyltransferase">
    <location>
        <begin position="1"/>
        <end position="371"/>
    </location>
</feature>
<feature type="topological domain" description="Cytoplasmic" evidence="3">
    <location>
        <begin position="1"/>
        <end position="6"/>
    </location>
</feature>
<feature type="transmembrane region" description="Helical; Signal-anchor for type II membrane protein" evidence="3">
    <location>
        <begin position="7"/>
        <end position="22"/>
    </location>
</feature>
<feature type="topological domain" description="Lumenal" evidence="3">
    <location>
        <begin position="23"/>
        <end position="371"/>
    </location>
</feature>
<feature type="active site" description="Nucleophile" evidence="2">
    <location>
        <position position="320"/>
    </location>
</feature>
<feature type="binding site" evidence="2">
    <location>
        <begin position="137"/>
        <end position="142"/>
    </location>
    <ligand>
        <name>substrate</name>
    </ligand>
</feature>
<feature type="binding site" evidence="2">
    <location>
        <begin position="228"/>
        <end position="230"/>
    </location>
    <ligand>
        <name>substrate</name>
    </ligand>
</feature>
<feature type="binding site" evidence="2">
    <location>
        <position position="228"/>
    </location>
    <ligand>
        <name>Mn(2+)</name>
        <dbReference type="ChEBI" id="CHEBI:29035"/>
    </ligand>
</feature>
<feature type="binding site" evidence="2">
    <location>
        <position position="230"/>
    </location>
    <ligand>
        <name>Mn(2+)</name>
        <dbReference type="ChEBI" id="CHEBI:29035"/>
    </ligand>
</feature>
<feature type="binding site" evidence="2">
    <location>
        <begin position="250"/>
        <end position="253"/>
    </location>
    <ligand>
        <name>substrate</name>
    </ligand>
</feature>
<feature type="binding site" evidence="2">
    <location>
        <position position="262"/>
    </location>
    <ligand>
        <name>substrate</name>
    </ligand>
</feature>
<feature type="binding site" evidence="2">
    <location>
        <begin position="362"/>
        <end position="368"/>
    </location>
    <ligand>
        <name>substrate</name>
    </ligand>
</feature>
<feature type="glycosylation site" description="N-linked (GlcNAc...) asparagine" evidence="3">
    <location>
        <position position="59"/>
    </location>
</feature>
<feature type="glycosylation site" description="N-linked (GlcNAc...) asparagine" evidence="3">
    <location>
        <position position="296"/>
    </location>
</feature>
<feature type="splice variant" id="VSP_001806" description="In isoform Short." evidence="4">
    <original>SPEGSLFWIYQSK</original>
    <variation>R</variation>
    <location>
        <begin position="27"/>
        <end position="39"/>
    </location>
</feature>
<feature type="sequence conflict" description="In Ref. 2; AAA58775." evidence="4" ref="2">
    <original>M</original>
    <variation>I</variation>
    <location>
        <position position="227"/>
    </location>
</feature>
<organism>
    <name type="scientific">Sus scrofa</name>
    <name type="common">Pig</name>
    <dbReference type="NCBI Taxonomy" id="9823"/>
    <lineage>
        <taxon>Eukaryota</taxon>
        <taxon>Metazoa</taxon>
        <taxon>Chordata</taxon>
        <taxon>Craniata</taxon>
        <taxon>Vertebrata</taxon>
        <taxon>Euteleostomi</taxon>
        <taxon>Mammalia</taxon>
        <taxon>Eutheria</taxon>
        <taxon>Laurasiatheria</taxon>
        <taxon>Artiodactyla</taxon>
        <taxon>Suina</taxon>
        <taxon>Suidae</taxon>
        <taxon>Sus</taxon>
    </lineage>
</organism>
<name>GGTA1_PIG</name>